<sequence>MVETDLMSSHSSNWKEIFRTHSIAQTIQLEKFVSQQIEEKGRELQQNVCFNYQSFIEASENLSNIRNNLEKVLQNSYEFQSMVSLPKVDRVSKFLSDNESISQTSGDYFIFLQRFYAHAILFVMELFNKEQYLQSSKLLIFCLRILPADLPNDHQCHILVNRLESCKNYLNNRLKQAMTSSLSKVSVVTSWILLNQANISSGLDIFLQECEDQLLILNDAREFSLTFLNTLKLARDFPNEIRSYLEASKNFNIFKEKEILRNICLDECYLKAYFSAEDVKVTTPFETLQQFDGDNILQQWKLSFFSKISHSEKSFFSNATSLTTLYQILEGLLSELSEPQFKEFYELWNSILQNHFIISSRNIIDSLGLYVNKIKEKLQICFEIPPTNSFDPWSFQLKQQVLNELKQNILPACGMDDGFQRFWQSLASFDMVLDESLQVLKKLQTLHLSFTLGDIIPNYLTLADYLLNFVKTSFAQIYELVCSFVNNVAVMESSSEKQLRTSRCLKIVRLLKQFRHMDESVPFDDLIYKLQNILVRELTDFTTGIYINESKINLDVAACITGNFFGPSFALYNSLIMLIDKLEVLGFDIVSDKFKGLLTPNLFESLFILNLERLKAAKSMDHMKQNTFDMEFINYLSDFTNNPREVIDYQHFIELIDLHVQDEFSKEDFDTVRANVKECVPKLLSFFTVLLPRVKAQKVIT</sequence>
<gene>
    <name type="primary">cog1</name>
    <name type="ORF">SPAC144.15c</name>
</gene>
<reference key="1">
    <citation type="journal article" date="2002" name="Nature">
        <title>The genome sequence of Schizosaccharomyces pombe.</title>
        <authorList>
            <person name="Wood V."/>
            <person name="Gwilliam R."/>
            <person name="Rajandream M.A."/>
            <person name="Lyne M.H."/>
            <person name="Lyne R."/>
            <person name="Stewart A."/>
            <person name="Sgouros J.G."/>
            <person name="Peat N."/>
            <person name="Hayles J."/>
            <person name="Baker S.G."/>
            <person name="Basham D."/>
            <person name="Bowman S."/>
            <person name="Brooks K."/>
            <person name="Brown D."/>
            <person name="Brown S."/>
            <person name="Chillingworth T."/>
            <person name="Churcher C.M."/>
            <person name="Collins M."/>
            <person name="Connor R."/>
            <person name="Cronin A."/>
            <person name="Davis P."/>
            <person name="Feltwell T."/>
            <person name="Fraser A."/>
            <person name="Gentles S."/>
            <person name="Goble A."/>
            <person name="Hamlin N."/>
            <person name="Harris D.E."/>
            <person name="Hidalgo J."/>
            <person name="Hodgson G."/>
            <person name="Holroyd S."/>
            <person name="Hornsby T."/>
            <person name="Howarth S."/>
            <person name="Huckle E.J."/>
            <person name="Hunt S."/>
            <person name="Jagels K."/>
            <person name="James K.D."/>
            <person name="Jones L."/>
            <person name="Jones M."/>
            <person name="Leather S."/>
            <person name="McDonald S."/>
            <person name="McLean J."/>
            <person name="Mooney P."/>
            <person name="Moule S."/>
            <person name="Mungall K.L."/>
            <person name="Murphy L.D."/>
            <person name="Niblett D."/>
            <person name="Odell C."/>
            <person name="Oliver K."/>
            <person name="O'Neil S."/>
            <person name="Pearson D."/>
            <person name="Quail M.A."/>
            <person name="Rabbinowitsch E."/>
            <person name="Rutherford K.M."/>
            <person name="Rutter S."/>
            <person name="Saunders D."/>
            <person name="Seeger K."/>
            <person name="Sharp S."/>
            <person name="Skelton J."/>
            <person name="Simmonds M.N."/>
            <person name="Squares R."/>
            <person name="Squares S."/>
            <person name="Stevens K."/>
            <person name="Taylor K."/>
            <person name="Taylor R.G."/>
            <person name="Tivey A."/>
            <person name="Walsh S.V."/>
            <person name="Warren T."/>
            <person name="Whitehead S."/>
            <person name="Woodward J.R."/>
            <person name="Volckaert G."/>
            <person name="Aert R."/>
            <person name="Robben J."/>
            <person name="Grymonprez B."/>
            <person name="Weltjens I."/>
            <person name="Vanstreels E."/>
            <person name="Rieger M."/>
            <person name="Schaefer M."/>
            <person name="Mueller-Auer S."/>
            <person name="Gabel C."/>
            <person name="Fuchs M."/>
            <person name="Duesterhoeft A."/>
            <person name="Fritzc C."/>
            <person name="Holzer E."/>
            <person name="Moestl D."/>
            <person name="Hilbert H."/>
            <person name="Borzym K."/>
            <person name="Langer I."/>
            <person name="Beck A."/>
            <person name="Lehrach H."/>
            <person name="Reinhardt R."/>
            <person name="Pohl T.M."/>
            <person name="Eger P."/>
            <person name="Zimmermann W."/>
            <person name="Wedler H."/>
            <person name="Wambutt R."/>
            <person name="Purnelle B."/>
            <person name="Goffeau A."/>
            <person name="Cadieu E."/>
            <person name="Dreano S."/>
            <person name="Gloux S."/>
            <person name="Lelaure V."/>
            <person name="Mottier S."/>
            <person name="Galibert F."/>
            <person name="Aves S.J."/>
            <person name="Xiang Z."/>
            <person name="Hunt C."/>
            <person name="Moore K."/>
            <person name="Hurst S.M."/>
            <person name="Lucas M."/>
            <person name="Rochet M."/>
            <person name="Gaillardin C."/>
            <person name="Tallada V.A."/>
            <person name="Garzon A."/>
            <person name="Thode G."/>
            <person name="Daga R.R."/>
            <person name="Cruzado L."/>
            <person name="Jimenez J."/>
            <person name="Sanchez M."/>
            <person name="del Rey F."/>
            <person name="Benito J."/>
            <person name="Dominguez A."/>
            <person name="Revuelta J.L."/>
            <person name="Moreno S."/>
            <person name="Armstrong J."/>
            <person name="Forsburg S.L."/>
            <person name="Cerutti L."/>
            <person name="Lowe T."/>
            <person name="McCombie W.R."/>
            <person name="Paulsen I."/>
            <person name="Potashkin J."/>
            <person name="Shpakovski G.V."/>
            <person name="Ussery D."/>
            <person name="Barrell B.G."/>
            <person name="Nurse P."/>
        </authorList>
    </citation>
    <scope>NUCLEOTIDE SEQUENCE [LARGE SCALE GENOMIC DNA]</scope>
    <source>
        <strain>972 / ATCC 24843</strain>
    </source>
</reference>
<reference key="2">
    <citation type="journal article" date="2006" name="Nat. Biotechnol.">
        <title>ORFeome cloning and global analysis of protein localization in the fission yeast Schizosaccharomyces pombe.</title>
        <authorList>
            <person name="Matsuyama A."/>
            <person name="Arai R."/>
            <person name="Yashiroda Y."/>
            <person name="Shirai A."/>
            <person name="Kamata A."/>
            <person name="Sekido S."/>
            <person name="Kobayashi Y."/>
            <person name="Hashimoto A."/>
            <person name="Hamamoto M."/>
            <person name="Hiraoka Y."/>
            <person name="Horinouchi S."/>
            <person name="Yoshida M."/>
        </authorList>
    </citation>
    <scope>SUBCELLULAR LOCATION [LARGE SCALE ANALYSIS]</scope>
</reference>
<comment type="function">
    <text evidence="1">Acts as essential component of the peripheral membrane COG complex that is involved in intra-Golgi protein trafficking. COG is located at the cis-Golgi, and regulates tethering of retrograde intra-Golgi vesicles and possibly a number of other membrane trafficking events (By similarity).</text>
</comment>
<comment type="subunit">
    <text evidence="1">Component of the conserved oligomeric Golgi (COG) complex which consists of eight different proteins cog1-cog8.</text>
</comment>
<comment type="subcellular location">
    <subcellularLocation>
        <location evidence="2">Cytoplasm</location>
    </subcellularLocation>
    <subcellularLocation>
        <location evidence="2">Nucleus</location>
    </subcellularLocation>
    <subcellularLocation>
        <location evidence="1">Golgi apparatus membrane</location>
        <topology evidence="1">Peripheral membrane protein</topology>
        <orientation evidence="1">Cytoplasmic side</orientation>
    </subcellularLocation>
</comment>
<comment type="similarity">
    <text evidence="3">Belongs to the COG1 family.</text>
</comment>
<name>COG1_SCHPO</name>
<evidence type="ECO:0000250" key="1"/>
<evidence type="ECO:0000269" key="2">
    <source>
    </source>
</evidence>
<evidence type="ECO:0000305" key="3"/>
<accession>Q9UTL1</accession>
<organism>
    <name type="scientific">Schizosaccharomyces pombe (strain 972 / ATCC 24843)</name>
    <name type="common">Fission yeast</name>
    <dbReference type="NCBI Taxonomy" id="284812"/>
    <lineage>
        <taxon>Eukaryota</taxon>
        <taxon>Fungi</taxon>
        <taxon>Dikarya</taxon>
        <taxon>Ascomycota</taxon>
        <taxon>Taphrinomycotina</taxon>
        <taxon>Schizosaccharomycetes</taxon>
        <taxon>Schizosaccharomycetales</taxon>
        <taxon>Schizosaccharomycetaceae</taxon>
        <taxon>Schizosaccharomyces</taxon>
    </lineage>
</organism>
<protein>
    <recommendedName>
        <fullName>Conserved oligomeric Golgi complex subunit 1</fullName>
        <shortName>COG complex subunit 1</shortName>
    </recommendedName>
</protein>
<proteinExistence type="inferred from homology"/>
<keyword id="KW-0963">Cytoplasm</keyword>
<keyword id="KW-0333">Golgi apparatus</keyword>
<keyword id="KW-0472">Membrane</keyword>
<keyword id="KW-0539">Nucleus</keyword>
<keyword id="KW-0653">Protein transport</keyword>
<keyword id="KW-1185">Reference proteome</keyword>
<keyword id="KW-0813">Transport</keyword>
<feature type="chain" id="PRO_0000304070" description="Conserved oligomeric Golgi complex subunit 1">
    <location>
        <begin position="1"/>
        <end position="701"/>
    </location>
</feature>
<dbReference type="EMBL" id="CU329670">
    <property type="protein sequence ID" value="CAB59695.1"/>
    <property type="molecule type" value="Genomic_DNA"/>
</dbReference>
<dbReference type="PIR" id="T37682">
    <property type="entry name" value="T37682"/>
</dbReference>
<dbReference type="RefSeq" id="NP_594676.1">
    <property type="nucleotide sequence ID" value="NM_001020105.2"/>
</dbReference>
<dbReference type="SMR" id="Q9UTL1"/>
<dbReference type="FunCoup" id="Q9UTL1">
    <property type="interactions" value="120"/>
</dbReference>
<dbReference type="STRING" id="284812.Q9UTL1"/>
<dbReference type="PaxDb" id="4896-SPAC144.15c.1"/>
<dbReference type="EnsemblFungi" id="SPAC144.15c.1">
    <property type="protein sequence ID" value="SPAC144.15c.1:pep"/>
    <property type="gene ID" value="SPAC144.15c"/>
</dbReference>
<dbReference type="PomBase" id="SPAC144.15c">
    <property type="gene designation" value="cog1"/>
</dbReference>
<dbReference type="VEuPathDB" id="FungiDB:SPAC144.15c"/>
<dbReference type="HOGENOM" id="CLU_393378_0_0_1"/>
<dbReference type="InParanoid" id="Q9UTL1"/>
<dbReference type="OMA" id="ELQQNVC"/>
<dbReference type="PRO" id="PR:Q9UTL1"/>
<dbReference type="Proteomes" id="UP000002485">
    <property type="component" value="Chromosome I"/>
</dbReference>
<dbReference type="GO" id="GO:0005829">
    <property type="term" value="C:cytosol"/>
    <property type="evidence" value="ECO:0007005"/>
    <property type="project" value="PomBase"/>
</dbReference>
<dbReference type="GO" id="GO:0005794">
    <property type="term" value="C:Golgi apparatus"/>
    <property type="evidence" value="ECO:0000318"/>
    <property type="project" value="GO_Central"/>
</dbReference>
<dbReference type="GO" id="GO:0000139">
    <property type="term" value="C:Golgi membrane"/>
    <property type="evidence" value="ECO:0007669"/>
    <property type="project" value="UniProtKB-SubCell"/>
</dbReference>
<dbReference type="GO" id="GO:0017119">
    <property type="term" value="C:Golgi transport complex"/>
    <property type="evidence" value="ECO:0000266"/>
    <property type="project" value="PomBase"/>
</dbReference>
<dbReference type="GO" id="GO:0005634">
    <property type="term" value="C:nucleus"/>
    <property type="evidence" value="ECO:0007005"/>
    <property type="project" value="PomBase"/>
</dbReference>
<dbReference type="GO" id="GO:0015031">
    <property type="term" value="P:protein transport"/>
    <property type="evidence" value="ECO:0007669"/>
    <property type="project" value="UniProtKB-KW"/>
</dbReference>
<dbReference type="GO" id="GO:0000301">
    <property type="term" value="P:retrograde transport, vesicle recycling within Golgi"/>
    <property type="evidence" value="ECO:0000266"/>
    <property type="project" value="PomBase"/>
</dbReference>
<dbReference type="InterPro" id="IPR033370">
    <property type="entry name" value="COG1"/>
</dbReference>
<dbReference type="PANTHER" id="PTHR31658">
    <property type="entry name" value="CONSERVED OLIGOMERIC GOLGI COMPLEX SUBUNIT 1"/>
    <property type="match status" value="1"/>
</dbReference>
<dbReference type="PANTHER" id="PTHR31658:SF0">
    <property type="entry name" value="CONSERVED OLIGOMERIC GOLGI COMPLEX SUBUNIT 1"/>
    <property type="match status" value="1"/>
</dbReference>
<dbReference type="Pfam" id="PF08700">
    <property type="entry name" value="VPS51_Exo84_N"/>
    <property type="match status" value="1"/>
</dbReference>